<evidence type="ECO:0000255" key="1">
    <source>
        <dbReference type="HAMAP-Rule" id="MF_00685"/>
    </source>
</evidence>
<reference key="1">
    <citation type="submission" date="2006-08" db="EMBL/GenBank/DDBJ databases">
        <title>Complete sequence of Shewanella sp. MR-4.</title>
        <authorList>
            <consortium name="US DOE Joint Genome Institute"/>
            <person name="Copeland A."/>
            <person name="Lucas S."/>
            <person name="Lapidus A."/>
            <person name="Barry K."/>
            <person name="Detter J.C."/>
            <person name="Glavina del Rio T."/>
            <person name="Hammon N."/>
            <person name="Israni S."/>
            <person name="Dalin E."/>
            <person name="Tice H."/>
            <person name="Pitluck S."/>
            <person name="Kiss H."/>
            <person name="Brettin T."/>
            <person name="Bruce D."/>
            <person name="Han C."/>
            <person name="Tapia R."/>
            <person name="Gilna P."/>
            <person name="Schmutz J."/>
            <person name="Larimer F."/>
            <person name="Land M."/>
            <person name="Hauser L."/>
            <person name="Kyrpides N."/>
            <person name="Mikhailova N."/>
            <person name="Nealson K."/>
            <person name="Konstantinidis K."/>
            <person name="Klappenbach J."/>
            <person name="Tiedje J."/>
            <person name="Richardson P."/>
        </authorList>
    </citation>
    <scope>NUCLEOTIDE SEQUENCE [LARGE SCALE GENOMIC DNA]</scope>
    <source>
        <strain>MR-4</strain>
    </source>
</reference>
<sequence>MMTQAQTYFYDGSDVALLNGQYTDVFSLLGMHSINEGKALVVRCFLRNAQKVDVISLKDGRKVASLERVNEAGLFAGTLGRRVKPFLYALRVVYPLCELDIIDPYQFGSLLDSQDLYLFGEGSSEQAYRFLGANWRQVDSVEGVHFCVWAPNAKRVSVVGDFNHWDDTRHVMRQHMANGLWEIFLPDVAEGTHYKFDLVYQNGERHAKSDPMATQMECAPHNASIVPKKHQHPWADTQWMHKRATTAWHRAAMSIYEVQLGSWRRKGEFGEQYFDYQDLIEQLIPYVKEQGFTHIELMPVSEYPFDGSWGYQPVGLYAPTHRFGDANGLKAFIDACHQAEIGVLLDWVAAHFPKDPHGLVRFDGTCLYEHEDPRKGTHPDWDTLIYNYDRGEVRSFLLSNACYWLREFHLDGLRLDAVSSMLYLDYSREPGQWLPNAYGGRENLEAIHFLQMLNQRLYQAFPGICMIAEESTAFAGVTKPTDSGGLGFGFKWNMGWMNDSLSYLGRDPIYRQYHHNQLTFSLMYAYSEQFMLSISHDEVVHGKGSLLHKIPGDDWQKFATLKAYYGFMWGHPGKKLLFMGSEFAQRDEWNHNHSLDWHLLAFEPHQGVQRWLRDLNQLYRQFPALSVLDYESQGFRWLDCDNGRDSIFSFVRYGEGSDVPLVFVVNMTPTLHQGFRIGLPQGGDFCEYLNSDSHLYGGSNQGNAGKVIAEDLPWQGMASSALITVPPLGCLILGPATDAPRDTSL</sequence>
<gene>
    <name evidence="1" type="primary">glgB</name>
    <name type="ordered locus">Shewmr4_2758</name>
</gene>
<proteinExistence type="inferred from homology"/>
<accession>Q0HGI8</accession>
<organism>
    <name type="scientific">Shewanella sp. (strain MR-4)</name>
    <dbReference type="NCBI Taxonomy" id="60480"/>
    <lineage>
        <taxon>Bacteria</taxon>
        <taxon>Pseudomonadati</taxon>
        <taxon>Pseudomonadota</taxon>
        <taxon>Gammaproteobacteria</taxon>
        <taxon>Alteromonadales</taxon>
        <taxon>Shewanellaceae</taxon>
        <taxon>Shewanella</taxon>
    </lineage>
</organism>
<keyword id="KW-0119">Carbohydrate metabolism</keyword>
<keyword id="KW-0320">Glycogen biosynthesis</keyword>
<keyword id="KW-0321">Glycogen metabolism</keyword>
<keyword id="KW-0328">Glycosyltransferase</keyword>
<keyword id="KW-0808">Transferase</keyword>
<comment type="function">
    <text evidence="1">Catalyzes the formation of the alpha-1,6-glucosidic linkages in glycogen by scission of a 1,4-alpha-linked oligosaccharide from growing alpha-1,4-glucan chains and the subsequent attachment of the oligosaccharide to the alpha-1,6 position.</text>
</comment>
<comment type="catalytic activity">
    <reaction evidence="1">
        <text>Transfers a segment of a (1-&gt;4)-alpha-D-glucan chain to a primary hydroxy group in a similar glucan chain.</text>
        <dbReference type="EC" id="2.4.1.18"/>
    </reaction>
</comment>
<comment type="pathway">
    <text evidence="1">Glycan biosynthesis; glycogen biosynthesis.</text>
</comment>
<comment type="subunit">
    <text evidence="1">Monomer.</text>
</comment>
<comment type="similarity">
    <text evidence="1">Belongs to the glycosyl hydrolase 13 family. GlgB subfamily.</text>
</comment>
<protein>
    <recommendedName>
        <fullName evidence="1">1,4-alpha-glucan branching enzyme GlgB</fullName>
        <ecNumber evidence="1">2.4.1.18</ecNumber>
    </recommendedName>
    <alternativeName>
        <fullName evidence="1">1,4-alpha-D-glucan:1,4-alpha-D-glucan 6-glucosyl-transferase</fullName>
    </alternativeName>
    <alternativeName>
        <fullName evidence="1">Alpha-(1-&gt;4)-glucan branching enzyme</fullName>
    </alternativeName>
    <alternativeName>
        <fullName evidence="1">Glycogen branching enzyme</fullName>
        <shortName evidence="1">BE</shortName>
    </alternativeName>
</protein>
<feature type="chain" id="PRO_0000260699" description="1,4-alpha-glucan branching enzyme GlgB">
    <location>
        <begin position="1"/>
        <end position="745"/>
    </location>
</feature>
<feature type="active site" description="Nucleophile" evidence="1">
    <location>
        <position position="416"/>
    </location>
</feature>
<feature type="active site" description="Proton donor" evidence="1">
    <location>
        <position position="469"/>
    </location>
</feature>
<name>GLGB_SHESM</name>
<dbReference type="EC" id="2.4.1.18" evidence="1"/>
<dbReference type="EMBL" id="CP000446">
    <property type="protein sequence ID" value="ABI39829.1"/>
    <property type="molecule type" value="Genomic_DNA"/>
</dbReference>
<dbReference type="RefSeq" id="WP_011623509.1">
    <property type="nucleotide sequence ID" value="NC_008321.1"/>
</dbReference>
<dbReference type="SMR" id="Q0HGI8"/>
<dbReference type="CAZy" id="CBM48">
    <property type="family name" value="Carbohydrate-Binding Module Family 48"/>
</dbReference>
<dbReference type="CAZy" id="GH13">
    <property type="family name" value="Glycoside Hydrolase Family 13"/>
</dbReference>
<dbReference type="KEGG" id="she:Shewmr4_2758"/>
<dbReference type="HOGENOM" id="CLU_004245_3_2_6"/>
<dbReference type="UniPathway" id="UPA00164"/>
<dbReference type="GO" id="GO:0005829">
    <property type="term" value="C:cytosol"/>
    <property type="evidence" value="ECO:0007669"/>
    <property type="project" value="TreeGrafter"/>
</dbReference>
<dbReference type="GO" id="GO:0003844">
    <property type="term" value="F:1,4-alpha-glucan branching enzyme activity"/>
    <property type="evidence" value="ECO:0007669"/>
    <property type="project" value="UniProtKB-UniRule"/>
</dbReference>
<dbReference type="GO" id="GO:0043169">
    <property type="term" value="F:cation binding"/>
    <property type="evidence" value="ECO:0007669"/>
    <property type="project" value="InterPro"/>
</dbReference>
<dbReference type="GO" id="GO:0004553">
    <property type="term" value="F:hydrolase activity, hydrolyzing O-glycosyl compounds"/>
    <property type="evidence" value="ECO:0007669"/>
    <property type="project" value="InterPro"/>
</dbReference>
<dbReference type="GO" id="GO:0005978">
    <property type="term" value="P:glycogen biosynthetic process"/>
    <property type="evidence" value="ECO:0007669"/>
    <property type="project" value="UniProtKB-UniRule"/>
</dbReference>
<dbReference type="CDD" id="cd11322">
    <property type="entry name" value="AmyAc_Glg_BE"/>
    <property type="match status" value="1"/>
</dbReference>
<dbReference type="CDD" id="cd02855">
    <property type="entry name" value="E_set_GBE_prok_N"/>
    <property type="match status" value="1"/>
</dbReference>
<dbReference type="FunFam" id="2.60.40.10:FF:000169">
    <property type="entry name" value="1,4-alpha-glucan branching enzyme GlgB"/>
    <property type="match status" value="1"/>
</dbReference>
<dbReference type="FunFam" id="2.60.40.1180:FF:000002">
    <property type="entry name" value="1,4-alpha-glucan branching enzyme GlgB"/>
    <property type="match status" value="1"/>
</dbReference>
<dbReference type="FunFam" id="3.20.20.80:FF:000003">
    <property type="entry name" value="1,4-alpha-glucan branching enzyme GlgB"/>
    <property type="match status" value="1"/>
</dbReference>
<dbReference type="Gene3D" id="3.20.20.80">
    <property type="entry name" value="Glycosidases"/>
    <property type="match status" value="1"/>
</dbReference>
<dbReference type="Gene3D" id="2.60.40.1180">
    <property type="entry name" value="Golgi alpha-mannosidase II"/>
    <property type="match status" value="1"/>
</dbReference>
<dbReference type="Gene3D" id="2.60.40.10">
    <property type="entry name" value="Immunoglobulins"/>
    <property type="match status" value="1"/>
</dbReference>
<dbReference type="HAMAP" id="MF_00685">
    <property type="entry name" value="GlgB"/>
    <property type="match status" value="1"/>
</dbReference>
<dbReference type="InterPro" id="IPR006048">
    <property type="entry name" value="A-amylase/branching_C"/>
</dbReference>
<dbReference type="InterPro" id="IPR037439">
    <property type="entry name" value="Branching_enzy"/>
</dbReference>
<dbReference type="InterPro" id="IPR006407">
    <property type="entry name" value="GlgB"/>
</dbReference>
<dbReference type="InterPro" id="IPR054169">
    <property type="entry name" value="GlgB_N"/>
</dbReference>
<dbReference type="InterPro" id="IPR044143">
    <property type="entry name" value="GlgB_N_E_set_prok"/>
</dbReference>
<dbReference type="InterPro" id="IPR006047">
    <property type="entry name" value="Glyco_hydro_13_cat_dom"/>
</dbReference>
<dbReference type="InterPro" id="IPR004193">
    <property type="entry name" value="Glyco_hydro_13_N"/>
</dbReference>
<dbReference type="InterPro" id="IPR013780">
    <property type="entry name" value="Glyco_hydro_b"/>
</dbReference>
<dbReference type="InterPro" id="IPR017853">
    <property type="entry name" value="Glycoside_hydrolase_SF"/>
</dbReference>
<dbReference type="InterPro" id="IPR013783">
    <property type="entry name" value="Ig-like_fold"/>
</dbReference>
<dbReference type="InterPro" id="IPR014756">
    <property type="entry name" value="Ig_E-set"/>
</dbReference>
<dbReference type="NCBIfam" id="TIGR01515">
    <property type="entry name" value="branching_enzym"/>
    <property type="match status" value="1"/>
</dbReference>
<dbReference type="NCBIfam" id="NF003811">
    <property type="entry name" value="PRK05402.1"/>
    <property type="match status" value="1"/>
</dbReference>
<dbReference type="NCBIfam" id="NF008967">
    <property type="entry name" value="PRK12313.1"/>
    <property type="match status" value="1"/>
</dbReference>
<dbReference type="PANTHER" id="PTHR43651">
    <property type="entry name" value="1,4-ALPHA-GLUCAN-BRANCHING ENZYME"/>
    <property type="match status" value="1"/>
</dbReference>
<dbReference type="PANTHER" id="PTHR43651:SF3">
    <property type="entry name" value="1,4-ALPHA-GLUCAN-BRANCHING ENZYME"/>
    <property type="match status" value="1"/>
</dbReference>
<dbReference type="Pfam" id="PF00128">
    <property type="entry name" value="Alpha-amylase"/>
    <property type="match status" value="1"/>
</dbReference>
<dbReference type="Pfam" id="PF02806">
    <property type="entry name" value="Alpha-amylase_C"/>
    <property type="match status" value="1"/>
</dbReference>
<dbReference type="Pfam" id="PF02922">
    <property type="entry name" value="CBM_48"/>
    <property type="match status" value="1"/>
</dbReference>
<dbReference type="Pfam" id="PF22019">
    <property type="entry name" value="GlgB_N"/>
    <property type="match status" value="1"/>
</dbReference>
<dbReference type="PIRSF" id="PIRSF000463">
    <property type="entry name" value="GlgB"/>
    <property type="match status" value="1"/>
</dbReference>
<dbReference type="SMART" id="SM00642">
    <property type="entry name" value="Aamy"/>
    <property type="match status" value="1"/>
</dbReference>
<dbReference type="SUPFAM" id="SSF51445">
    <property type="entry name" value="(Trans)glycosidases"/>
    <property type="match status" value="1"/>
</dbReference>
<dbReference type="SUPFAM" id="SSF81296">
    <property type="entry name" value="E set domains"/>
    <property type="match status" value="1"/>
</dbReference>
<dbReference type="SUPFAM" id="SSF51011">
    <property type="entry name" value="Glycosyl hydrolase domain"/>
    <property type="match status" value="1"/>
</dbReference>